<feature type="chain" id="PRO_0000448069" description="ATP-dependent zinc metalloprotease YME1L">
    <location>
        <begin position="1"/>
        <end position="740"/>
    </location>
</feature>
<feature type="topological domain" description="Mitochondrial matrix" evidence="6">
    <location>
        <begin position="1"/>
        <end position="256"/>
    </location>
</feature>
<feature type="transmembrane region" description="Helical" evidence="3">
    <location>
        <begin position="257"/>
        <end position="277"/>
    </location>
</feature>
<feature type="topological domain" description="Mitochondrial intermembrane" evidence="6">
    <location>
        <begin position="278"/>
        <end position="740"/>
    </location>
</feature>
<feature type="active site" evidence="2">
    <location>
        <position position="564"/>
    </location>
</feature>
<feature type="binding site" evidence="2">
    <location>
        <begin position="347"/>
        <end position="351"/>
    </location>
    <ligand>
        <name>ATP</name>
        <dbReference type="ChEBI" id="CHEBI:30616"/>
    </ligand>
</feature>
<feature type="binding site" evidence="2">
    <location>
        <position position="563"/>
    </location>
    <ligand>
        <name>Zn(2+)</name>
        <dbReference type="ChEBI" id="CHEBI:29105"/>
        <note>catalytic</note>
    </ligand>
</feature>
<feature type="binding site" evidence="2">
    <location>
        <position position="567"/>
    </location>
    <ligand>
        <name>Zn(2+)</name>
        <dbReference type="ChEBI" id="CHEBI:29105"/>
        <note>catalytic</note>
    </ligand>
</feature>
<feature type="binding site" evidence="2">
    <location>
        <position position="641"/>
    </location>
    <ligand>
        <name>Zn(2+)</name>
        <dbReference type="ChEBI" id="CHEBI:29105"/>
        <note>catalytic</note>
    </ligand>
</feature>
<feature type="splice variant" id="VSP_060331" description="In isoform B.">
    <location>
        <begin position="257"/>
        <end position="259"/>
    </location>
</feature>
<feature type="splice variant" id="VSP_060332" description="In isoform B.">
    <location>
        <position position="285"/>
    </location>
</feature>
<evidence type="ECO:0000250" key="1">
    <source>
        <dbReference type="UniProtKB" id="Q96TA2"/>
    </source>
</evidence>
<evidence type="ECO:0000250" key="2">
    <source>
        <dbReference type="UniProtKB" id="Q9WZ49"/>
    </source>
</evidence>
<evidence type="ECO:0000255" key="3"/>
<evidence type="ECO:0000269" key="4">
    <source>
    </source>
</evidence>
<evidence type="ECO:0000269" key="5">
    <source>
    </source>
</evidence>
<evidence type="ECO:0000305" key="6"/>
<evidence type="ECO:0000312" key="7">
    <source>
        <dbReference type="EMBL" id="AAK92904.1"/>
    </source>
</evidence>
<evidence type="ECO:0000312" key="8">
    <source>
        <dbReference type="EMBL" id="AEB39673.1"/>
    </source>
</evidence>
<evidence type="ECO:0000312" key="9">
    <source>
        <dbReference type="EMBL" id="AFH08226.1"/>
    </source>
</evidence>
<evidence type="ECO:0000312" key="10">
    <source>
        <dbReference type="FlyBase" id="FBgn0034792"/>
    </source>
</evidence>
<evidence type="ECO:0000312" key="11">
    <source>
        <dbReference type="Proteomes" id="UP000000803"/>
    </source>
</evidence>
<name>YMEL1_DROME</name>
<dbReference type="EC" id="3.4.24.-" evidence="9"/>
<dbReference type="EMBL" id="AE013599">
    <property type="protein sequence ID" value="AAM71132.2"/>
    <property type="molecule type" value="Genomic_DNA"/>
</dbReference>
<dbReference type="EMBL" id="AE013599">
    <property type="protein sequence ID" value="AFH08226.1"/>
    <property type="molecule type" value="Genomic_DNA"/>
</dbReference>
<dbReference type="EMBL" id="AY051480">
    <property type="protein sequence ID" value="AAK92904.1"/>
    <property type="molecule type" value="mRNA"/>
</dbReference>
<dbReference type="EMBL" id="BT126312">
    <property type="protein sequence ID" value="AEB39673.1"/>
    <property type="molecule type" value="mRNA"/>
</dbReference>
<dbReference type="RefSeq" id="NP_001246473.1">
    <molecule id="F3YDF1-1"/>
    <property type="nucleotide sequence ID" value="NM_001259544.2"/>
</dbReference>
<dbReference type="RefSeq" id="NP_726263.1">
    <molecule id="F3YDF1-2"/>
    <property type="nucleotide sequence ID" value="NM_166568.3"/>
</dbReference>
<dbReference type="SMR" id="F3YDF1"/>
<dbReference type="FunCoup" id="F3YDF1">
    <property type="interactions" value="2763"/>
</dbReference>
<dbReference type="IntAct" id="F3YDF1">
    <property type="interactions" value="11"/>
</dbReference>
<dbReference type="STRING" id="7227.FBpp0293463"/>
<dbReference type="MEROPS" id="M41.A11"/>
<dbReference type="PaxDb" id="7227-FBpp0293463"/>
<dbReference type="DNASU" id="37636"/>
<dbReference type="EnsemblMetazoa" id="FBtr0071906">
    <molecule id="F3YDF1-2"/>
    <property type="protein sequence ID" value="FBpp0071817"/>
    <property type="gene ID" value="FBgn0034792"/>
</dbReference>
<dbReference type="EnsemblMetazoa" id="FBtr0304924">
    <molecule id="F3YDF1-1"/>
    <property type="protein sequence ID" value="FBpp0293463"/>
    <property type="gene ID" value="FBgn0034792"/>
</dbReference>
<dbReference type="GeneID" id="37636"/>
<dbReference type="KEGG" id="dme:Dmel_CG3499"/>
<dbReference type="UCSC" id="CG3499-RB">
    <property type="organism name" value="d. melanogaster"/>
</dbReference>
<dbReference type="AGR" id="FB:FBgn0034792"/>
<dbReference type="CTD" id="37636"/>
<dbReference type="FlyBase" id="FBgn0034792">
    <property type="gene designation" value="YME1L"/>
</dbReference>
<dbReference type="VEuPathDB" id="VectorBase:FBgn0034792"/>
<dbReference type="eggNOG" id="KOG0734">
    <property type="taxonomic scope" value="Eukaryota"/>
</dbReference>
<dbReference type="GeneTree" id="ENSGT00550000074836"/>
<dbReference type="HOGENOM" id="CLU_000688_19_1_1"/>
<dbReference type="InParanoid" id="F3YDF1"/>
<dbReference type="OMA" id="TANEVYP"/>
<dbReference type="OrthoDB" id="1413014at2759"/>
<dbReference type="PhylomeDB" id="F3YDF1"/>
<dbReference type="Reactome" id="R-DME-8949664">
    <property type="pathway name" value="Processing of SMDT1"/>
</dbReference>
<dbReference type="Reactome" id="R-DME-9837999">
    <property type="pathway name" value="Mitochondrial protein degradation"/>
</dbReference>
<dbReference type="BioGRID-ORCS" id="37636">
    <property type="hits" value="1 hit in 1 CRISPR screen"/>
</dbReference>
<dbReference type="GenomeRNAi" id="37636"/>
<dbReference type="PRO" id="PR:F3YDF1"/>
<dbReference type="Proteomes" id="UP000000803">
    <property type="component" value="Chromosome 2R"/>
</dbReference>
<dbReference type="Bgee" id="FBgn0034792">
    <property type="expression patterns" value="Expressed in mid-late elongation-stage spermatid (Drosophila) in testis and 164 other cell types or tissues"/>
</dbReference>
<dbReference type="ExpressionAtlas" id="F3YDF1">
    <property type="expression patterns" value="baseline and differential"/>
</dbReference>
<dbReference type="GO" id="GO:0031942">
    <property type="term" value="C:i-AAA complex"/>
    <property type="evidence" value="ECO:0000250"/>
    <property type="project" value="FlyBase"/>
</dbReference>
<dbReference type="GO" id="GO:0005745">
    <property type="term" value="C:m-AAA complex"/>
    <property type="evidence" value="ECO:0000318"/>
    <property type="project" value="GO_Central"/>
</dbReference>
<dbReference type="GO" id="GO:0005743">
    <property type="term" value="C:mitochondrial inner membrane"/>
    <property type="evidence" value="ECO:0000250"/>
    <property type="project" value="FlyBase"/>
</dbReference>
<dbReference type="GO" id="GO:0005739">
    <property type="term" value="C:mitochondrion"/>
    <property type="evidence" value="ECO:0000314"/>
    <property type="project" value="FlyBase"/>
</dbReference>
<dbReference type="GO" id="GO:0005524">
    <property type="term" value="F:ATP binding"/>
    <property type="evidence" value="ECO:0007669"/>
    <property type="project" value="UniProtKB-KW"/>
</dbReference>
<dbReference type="GO" id="GO:0016887">
    <property type="term" value="F:ATP hydrolysis activity"/>
    <property type="evidence" value="ECO:0007669"/>
    <property type="project" value="InterPro"/>
</dbReference>
<dbReference type="GO" id="GO:0004176">
    <property type="term" value="F:ATP-dependent peptidase activity"/>
    <property type="evidence" value="ECO:0000250"/>
    <property type="project" value="FlyBase"/>
</dbReference>
<dbReference type="GO" id="GO:0046872">
    <property type="term" value="F:metal ion binding"/>
    <property type="evidence" value="ECO:0007669"/>
    <property type="project" value="UniProtKB-KW"/>
</dbReference>
<dbReference type="GO" id="GO:0004222">
    <property type="term" value="F:metalloendopeptidase activity"/>
    <property type="evidence" value="ECO:0000318"/>
    <property type="project" value="GO_Central"/>
</dbReference>
<dbReference type="GO" id="GO:0035694">
    <property type="term" value="P:mitochondrial protein catabolic process"/>
    <property type="evidence" value="ECO:0000250"/>
    <property type="project" value="FlyBase"/>
</dbReference>
<dbReference type="GO" id="GO:0034982">
    <property type="term" value="P:mitochondrial protein processing"/>
    <property type="evidence" value="ECO:0000318"/>
    <property type="project" value="GO_Central"/>
</dbReference>
<dbReference type="GO" id="GO:0141164">
    <property type="term" value="P:mitochondrial protein quality control"/>
    <property type="evidence" value="ECO:0000315"/>
    <property type="project" value="FlyBase"/>
</dbReference>
<dbReference type="CDD" id="cd19501">
    <property type="entry name" value="RecA-like_FtsH"/>
    <property type="match status" value="1"/>
</dbReference>
<dbReference type="FunFam" id="1.10.8.60:FF:000001">
    <property type="entry name" value="ATP-dependent zinc metalloprotease FtsH"/>
    <property type="match status" value="1"/>
</dbReference>
<dbReference type="FunFam" id="1.20.58.760:FF:000002">
    <property type="entry name" value="ATP-dependent zinc metalloprotease FtsH"/>
    <property type="match status" value="1"/>
</dbReference>
<dbReference type="FunFam" id="3.40.50.300:FF:000175">
    <property type="entry name" value="ATP-dependent zinc metalloprotease FTSH 4"/>
    <property type="match status" value="1"/>
</dbReference>
<dbReference type="Gene3D" id="1.10.8.60">
    <property type="match status" value="1"/>
</dbReference>
<dbReference type="Gene3D" id="3.40.50.300">
    <property type="entry name" value="P-loop containing nucleotide triphosphate hydrolases"/>
    <property type="match status" value="1"/>
</dbReference>
<dbReference type="Gene3D" id="1.20.58.760">
    <property type="entry name" value="Peptidase M41"/>
    <property type="match status" value="1"/>
</dbReference>
<dbReference type="HAMAP" id="MF_01458">
    <property type="entry name" value="FtsH"/>
    <property type="match status" value="1"/>
</dbReference>
<dbReference type="InterPro" id="IPR003593">
    <property type="entry name" value="AAA+_ATPase"/>
</dbReference>
<dbReference type="InterPro" id="IPR041569">
    <property type="entry name" value="AAA_lid_3"/>
</dbReference>
<dbReference type="InterPro" id="IPR003959">
    <property type="entry name" value="ATPase_AAA_core"/>
</dbReference>
<dbReference type="InterPro" id="IPR003960">
    <property type="entry name" value="ATPase_AAA_CS"/>
</dbReference>
<dbReference type="InterPro" id="IPR005936">
    <property type="entry name" value="FtsH"/>
</dbReference>
<dbReference type="InterPro" id="IPR027417">
    <property type="entry name" value="P-loop_NTPase"/>
</dbReference>
<dbReference type="InterPro" id="IPR000642">
    <property type="entry name" value="Peptidase_M41"/>
</dbReference>
<dbReference type="InterPro" id="IPR037219">
    <property type="entry name" value="Peptidase_M41-like"/>
</dbReference>
<dbReference type="NCBIfam" id="TIGR01241">
    <property type="entry name" value="FtsH_fam"/>
    <property type="match status" value="1"/>
</dbReference>
<dbReference type="PANTHER" id="PTHR23076:SF97">
    <property type="entry name" value="ATP-DEPENDENT ZINC METALLOPROTEASE YME1L1"/>
    <property type="match status" value="1"/>
</dbReference>
<dbReference type="PANTHER" id="PTHR23076">
    <property type="entry name" value="METALLOPROTEASE M41 FTSH"/>
    <property type="match status" value="1"/>
</dbReference>
<dbReference type="Pfam" id="PF00004">
    <property type="entry name" value="AAA"/>
    <property type="match status" value="1"/>
</dbReference>
<dbReference type="Pfam" id="PF17862">
    <property type="entry name" value="AAA_lid_3"/>
    <property type="match status" value="1"/>
</dbReference>
<dbReference type="Pfam" id="PF01434">
    <property type="entry name" value="Peptidase_M41"/>
    <property type="match status" value="1"/>
</dbReference>
<dbReference type="SMART" id="SM00382">
    <property type="entry name" value="AAA"/>
    <property type="match status" value="1"/>
</dbReference>
<dbReference type="SUPFAM" id="SSF140990">
    <property type="entry name" value="FtsH protease domain-like"/>
    <property type="match status" value="1"/>
</dbReference>
<dbReference type="SUPFAM" id="SSF52540">
    <property type="entry name" value="P-loop containing nucleoside triphosphate hydrolases"/>
    <property type="match status" value="1"/>
</dbReference>
<dbReference type="PROSITE" id="PS00674">
    <property type="entry name" value="AAA"/>
    <property type="match status" value="1"/>
</dbReference>
<keyword id="KW-0025">Alternative splicing</keyword>
<keyword id="KW-0067">ATP-binding</keyword>
<keyword id="KW-0378">Hydrolase</keyword>
<keyword id="KW-0472">Membrane</keyword>
<keyword id="KW-0479">Metal-binding</keyword>
<keyword id="KW-0482">Metalloprotease</keyword>
<keyword id="KW-0496">Mitochondrion</keyword>
<keyword id="KW-0999">Mitochondrion inner membrane</keyword>
<keyword id="KW-0547">Nucleotide-binding</keyword>
<keyword id="KW-0645">Protease</keyword>
<keyword id="KW-1185">Reference proteome</keyword>
<keyword id="KW-0812">Transmembrane</keyword>
<keyword id="KW-1133">Transmembrane helix</keyword>
<keyword id="KW-0862">Zinc</keyword>
<accession>F3YDF1</accession>
<accession>Q8MMD4</accession>
<accession>Q9W1Y0</accession>
<sequence length="740" mass="81081">MFSTTTHSVPYLYLGNFSRKPHYYSVNRTKLHGSAGAARLSKSTSTSSRSHDLVLDLRNLLSRSSASIQGMVERAARLNGILDRRLVDDVLAKVTSMLPSMRDVRVTLEESATQIGRVQLQNYQFEVSLTGAAGSVPTGANVKVIPTITPGLLRPLFSQQQLNQIRGFKTDRSIEAEQKRNPTMTSRLKNALANSPQRLDGDTPLQAEKLRRLLAKSEEHGFNKAESLKIAFAEGYLAAANSEDSPKSGKTMKYLKTLQTIVVIVVFLGIFLSFFTTSNGSVFRSIQLGNQVEVDPEEINVTFEDVKGCDEAKQELKEVVEFLKSPEKFSNLGGKLPKGVLLVGPPGTGKTLLARAVAGEAKVPFFHAAGPEFDEVLVGQGARRVRDLFKAAKARAPCVIFIDEIDSVGAKRTNSVLHPYANQTINQLLSEMDGFHQNAGVIVLGATNRRDDLDQALLRPGRFDVEVMVSTPDFTGRKEILSLYLTKILHDEIDLDMLARGTSGFTGADLENMINQAALRAAIDGAETVSMKHLETARDKVLMGPERKARLPDEEANTITAYHEGGHAIVAFYTKESHPLHKVTIMPRGPSLGHTAYIPEKERYHVTKAQLLAMMDTMMGGRAAEELVFGTDKITSGASSDLKQATSIATHMVRDWGMSDKVGLRTIEASKGLGTGDTLGPNTIEAVDAEIKRILSDSYERAKAILRKHTREHKALAEALLKYETLDADDIKAILNESQT</sequence>
<gene>
    <name evidence="10" type="primary">YME1L</name>
    <name evidence="10" type="ORF">CG3499</name>
</gene>
<reference evidence="11" key="1">
    <citation type="journal article" date="2000" name="Science">
        <title>The genome sequence of Drosophila melanogaster.</title>
        <authorList>
            <person name="Adams M.D."/>
            <person name="Celniker S.E."/>
            <person name="Holt R.A."/>
            <person name="Evans C.A."/>
            <person name="Gocayne J.D."/>
            <person name="Amanatides P.G."/>
            <person name="Scherer S.E."/>
            <person name="Li P.W."/>
            <person name="Hoskins R.A."/>
            <person name="Galle R.F."/>
            <person name="George R.A."/>
            <person name="Lewis S.E."/>
            <person name="Richards S."/>
            <person name="Ashburner M."/>
            <person name="Henderson S.N."/>
            <person name="Sutton G.G."/>
            <person name="Wortman J.R."/>
            <person name="Yandell M.D."/>
            <person name="Zhang Q."/>
            <person name="Chen L.X."/>
            <person name="Brandon R.C."/>
            <person name="Rogers Y.-H.C."/>
            <person name="Blazej R.G."/>
            <person name="Champe M."/>
            <person name="Pfeiffer B.D."/>
            <person name="Wan K.H."/>
            <person name="Doyle C."/>
            <person name="Baxter E.G."/>
            <person name="Helt G."/>
            <person name="Nelson C.R."/>
            <person name="Miklos G.L.G."/>
            <person name="Abril J.F."/>
            <person name="Agbayani A."/>
            <person name="An H.-J."/>
            <person name="Andrews-Pfannkoch C."/>
            <person name="Baldwin D."/>
            <person name="Ballew R.M."/>
            <person name="Basu A."/>
            <person name="Baxendale J."/>
            <person name="Bayraktaroglu L."/>
            <person name="Beasley E.M."/>
            <person name="Beeson K.Y."/>
            <person name="Benos P.V."/>
            <person name="Berman B.P."/>
            <person name="Bhandari D."/>
            <person name="Bolshakov S."/>
            <person name="Borkova D."/>
            <person name="Botchan M.R."/>
            <person name="Bouck J."/>
            <person name="Brokstein P."/>
            <person name="Brottier P."/>
            <person name="Burtis K.C."/>
            <person name="Busam D.A."/>
            <person name="Butler H."/>
            <person name="Cadieu E."/>
            <person name="Center A."/>
            <person name="Chandra I."/>
            <person name="Cherry J.M."/>
            <person name="Cawley S."/>
            <person name="Dahlke C."/>
            <person name="Davenport L.B."/>
            <person name="Davies P."/>
            <person name="de Pablos B."/>
            <person name="Delcher A."/>
            <person name="Deng Z."/>
            <person name="Mays A.D."/>
            <person name="Dew I."/>
            <person name="Dietz S.M."/>
            <person name="Dodson K."/>
            <person name="Doup L.E."/>
            <person name="Downes M."/>
            <person name="Dugan-Rocha S."/>
            <person name="Dunkov B.C."/>
            <person name="Dunn P."/>
            <person name="Durbin K.J."/>
            <person name="Evangelista C.C."/>
            <person name="Ferraz C."/>
            <person name="Ferriera S."/>
            <person name="Fleischmann W."/>
            <person name="Fosler C."/>
            <person name="Gabrielian A.E."/>
            <person name="Garg N.S."/>
            <person name="Gelbart W.M."/>
            <person name="Glasser K."/>
            <person name="Glodek A."/>
            <person name="Gong F."/>
            <person name="Gorrell J.H."/>
            <person name="Gu Z."/>
            <person name="Guan P."/>
            <person name="Harris M."/>
            <person name="Harris N.L."/>
            <person name="Harvey D.A."/>
            <person name="Heiman T.J."/>
            <person name="Hernandez J.R."/>
            <person name="Houck J."/>
            <person name="Hostin D."/>
            <person name="Houston K.A."/>
            <person name="Howland T.J."/>
            <person name="Wei M.-H."/>
            <person name="Ibegwam C."/>
            <person name="Jalali M."/>
            <person name="Kalush F."/>
            <person name="Karpen G.H."/>
            <person name="Ke Z."/>
            <person name="Kennison J.A."/>
            <person name="Ketchum K.A."/>
            <person name="Kimmel B.E."/>
            <person name="Kodira C.D."/>
            <person name="Kraft C.L."/>
            <person name="Kravitz S."/>
            <person name="Kulp D."/>
            <person name="Lai Z."/>
            <person name="Lasko P."/>
            <person name="Lei Y."/>
            <person name="Levitsky A.A."/>
            <person name="Li J.H."/>
            <person name="Li Z."/>
            <person name="Liang Y."/>
            <person name="Lin X."/>
            <person name="Liu X."/>
            <person name="Mattei B."/>
            <person name="McIntosh T.C."/>
            <person name="McLeod M.P."/>
            <person name="McPherson D."/>
            <person name="Merkulov G."/>
            <person name="Milshina N.V."/>
            <person name="Mobarry C."/>
            <person name="Morris J."/>
            <person name="Moshrefi A."/>
            <person name="Mount S.M."/>
            <person name="Moy M."/>
            <person name="Murphy B."/>
            <person name="Murphy L."/>
            <person name="Muzny D.M."/>
            <person name="Nelson D.L."/>
            <person name="Nelson D.R."/>
            <person name="Nelson K.A."/>
            <person name="Nixon K."/>
            <person name="Nusskern D.R."/>
            <person name="Pacleb J.M."/>
            <person name="Palazzolo M."/>
            <person name="Pittman G.S."/>
            <person name="Pan S."/>
            <person name="Pollard J."/>
            <person name="Puri V."/>
            <person name="Reese M.G."/>
            <person name="Reinert K."/>
            <person name="Remington K."/>
            <person name="Saunders R.D.C."/>
            <person name="Scheeler F."/>
            <person name="Shen H."/>
            <person name="Shue B.C."/>
            <person name="Siden-Kiamos I."/>
            <person name="Simpson M."/>
            <person name="Skupski M.P."/>
            <person name="Smith T.J."/>
            <person name="Spier E."/>
            <person name="Spradling A.C."/>
            <person name="Stapleton M."/>
            <person name="Strong R."/>
            <person name="Sun E."/>
            <person name="Svirskas R."/>
            <person name="Tector C."/>
            <person name="Turner R."/>
            <person name="Venter E."/>
            <person name="Wang A.H."/>
            <person name="Wang X."/>
            <person name="Wang Z.-Y."/>
            <person name="Wassarman D.A."/>
            <person name="Weinstock G.M."/>
            <person name="Weissenbach J."/>
            <person name="Williams S.M."/>
            <person name="Woodage T."/>
            <person name="Worley K.C."/>
            <person name="Wu D."/>
            <person name="Yang S."/>
            <person name="Yao Q.A."/>
            <person name="Ye J."/>
            <person name="Yeh R.-F."/>
            <person name="Zaveri J.S."/>
            <person name="Zhan M."/>
            <person name="Zhang G."/>
            <person name="Zhao Q."/>
            <person name="Zheng L."/>
            <person name="Zheng X.H."/>
            <person name="Zhong F.N."/>
            <person name="Zhong W."/>
            <person name="Zhou X."/>
            <person name="Zhu S.C."/>
            <person name="Zhu X."/>
            <person name="Smith H.O."/>
            <person name="Gibbs R.A."/>
            <person name="Myers E.W."/>
            <person name="Rubin G.M."/>
            <person name="Venter J.C."/>
        </authorList>
    </citation>
    <scope>NUCLEOTIDE SEQUENCE [LARGE SCALE GENOMIC DNA]</scope>
    <source>
        <strain evidence="11">Berkeley</strain>
    </source>
</reference>
<reference evidence="11" key="2">
    <citation type="journal article" date="2002" name="Genome Biol.">
        <title>Annotation of the Drosophila melanogaster euchromatic genome: a systematic review.</title>
        <authorList>
            <person name="Misra S."/>
            <person name="Crosby M.A."/>
            <person name="Mungall C.J."/>
            <person name="Matthews B.B."/>
            <person name="Campbell K.S."/>
            <person name="Hradecky P."/>
            <person name="Huang Y."/>
            <person name="Kaminker J.S."/>
            <person name="Millburn G.H."/>
            <person name="Prochnik S.E."/>
            <person name="Smith C.D."/>
            <person name="Tupy J.L."/>
            <person name="Whitfield E.J."/>
            <person name="Bayraktaroglu L."/>
            <person name="Berman B.P."/>
            <person name="Bettencourt B.R."/>
            <person name="Celniker S.E."/>
            <person name="de Grey A.D.N.J."/>
            <person name="Drysdale R.A."/>
            <person name="Harris N.L."/>
            <person name="Richter J."/>
            <person name="Russo S."/>
            <person name="Schroeder A.J."/>
            <person name="Shu S.Q."/>
            <person name="Stapleton M."/>
            <person name="Yamada C."/>
            <person name="Ashburner M."/>
            <person name="Gelbart W.M."/>
            <person name="Rubin G.M."/>
            <person name="Lewis S.E."/>
        </authorList>
    </citation>
    <scope>GENOME REANNOTATION</scope>
    <source>
        <strain evidence="11">Berkeley</strain>
    </source>
</reference>
<reference evidence="7" key="3">
    <citation type="journal article" date="2002" name="Genome Biol.">
        <title>A Drosophila full-length cDNA resource.</title>
        <authorList>
            <person name="Stapleton M."/>
            <person name="Carlson J.W."/>
            <person name="Brokstein P."/>
            <person name="Yu C."/>
            <person name="Champe M."/>
            <person name="George R.A."/>
            <person name="Guarin H."/>
            <person name="Kronmiller B."/>
            <person name="Pacleb J.M."/>
            <person name="Park S."/>
            <person name="Wan K.H."/>
            <person name="Rubin G.M."/>
            <person name="Celniker S.E."/>
        </authorList>
    </citation>
    <scope>NUCLEOTIDE SEQUENCE [LARGE SCALE MRNA] (ISOFORM B)</scope>
    <source>
        <strain evidence="7">Berkeley</strain>
        <tissue evidence="7">Head</tissue>
    </source>
</reference>
<reference evidence="8" key="4">
    <citation type="submission" date="2011-04" db="EMBL/GenBank/DDBJ databases">
        <authorList>
            <person name="Carlson J."/>
            <person name="Booth B."/>
            <person name="Frise E."/>
            <person name="Sandler J."/>
            <person name="Wan K."/>
            <person name="Yu C."/>
            <person name="Celniker S."/>
        </authorList>
    </citation>
    <scope>NUCLEOTIDE SEQUENCE [LARGE SCALE MRNA] (ISOFORM C)</scope>
    <source>
        <strain evidence="8">Berkeley</strain>
    </source>
</reference>
<reference evidence="6" key="5">
    <citation type="journal article" date="2016" name="Cell Death Differ.">
        <title>Loss of Drosophila i-AAA protease, dYME1L, causes abnormal mitochondria and apoptotic degeneration.</title>
        <authorList>
            <person name="Qi Y."/>
            <person name="Liu H."/>
            <person name="Daniels M.P."/>
            <person name="Zhang G."/>
            <person name="Xu H."/>
        </authorList>
    </citation>
    <scope>FUNCTION</scope>
    <scope>SUBCELLULAR LOCATION</scope>
    <scope>DISRUPTION PHENOTYPE</scope>
</reference>
<reference evidence="6" key="6">
    <citation type="journal article" date="2019" name="PLoS Genet.">
        <title>Drosophila ADCK1 is critical for maintaining mitochondrial structures and functions in the muscle.</title>
        <authorList>
            <person name="Yoon W."/>
            <person name="Hwang S.H."/>
            <person name="Lee S.H."/>
            <person name="Chung J."/>
        </authorList>
    </citation>
    <scope>FUNCTION</scope>
</reference>
<comment type="function">
    <text evidence="4 5">ATP-dependent metalloprotease that catalyzes the degradation of folded and unfolded proteins with a suitable degron sequence in the mitochondrial intermembrane region (PubMed:26160069). Plays an important role in regulating mitochondrial morphology and function by cleaving Opa1, giving rise to a form of Opa1 that promotes maintenance of normal mitochondrial structure and mitochondrial protein metabolism (PubMed:31125351). Ensures cell proliferation, maintains normal cristae morphology and complex I respiration activity, promotes antiapoptotic activity and protects mitochondria from the accumulation of oxidatively damaged membrane proteins (PubMed:26160069, PubMed:31125351). Required to control the accumulation of nonassembled respiratory chain subunits such as ND-30 (PubMed:26160069).</text>
</comment>
<comment type="cofactor">
    <cofactor evidence="1">
        <name>Zn(2+)</name>
        <dbReference type="ChEBI" id="CHEBI:29105"/>
    </cofactor>
    <text evidence="1">Binds 1 zinc ion per subunit.</text>
</comment>
<comment type="subcellular location">
    <subcellularLocation>
        <location evidence="4">Mitochondrion inner membrane</location>
        <topology evidence="3">Single-pass membrane protein</topology>
    </subcellularLocation>
</comment>
<comment type="alternative products">
    <event type="alternative splicing"/>
    <isoform>
        <id>F3YDF1-1</id>
        <name evidence="10">C</name>
        <sequence type="displayed"/>
    </isoform>
    <isoform>
        <id>F3YDF1-2</id>
        <name evidence="10">B</name>
        <sequence type="described" ref="VSP_060331 VSP_060332"/>
    </isoform>
</comment>
<comment type="disruption phenotype">
    <text evidence="4">Viable but lifespan is reduced and males are sterile. Mitochondrial proteostasis is disrupted leading to crista disorganization, mitochondrial unfolded protein stress and impaired complex I activity which increases levels of reactive oxygen species (ROS). These defects all likely contribute to the increase in Dronc-mediated apoptosis in neuromuscular tissue. The severity of the mitochondrial abnormalities and their resulting phenotypes increase with age, resulting in the progressive degeneration of photoreceptor neurons and locomotor activity and increased sensitivity to genetic and environmental stresses.</text>
</comment>
<comment type="similarity">
    <text evidence="6">In the N-terminal section; belongs to the AAA ATPase family.</text>
</comment>
<comment type="similarity">
    <text evidence="6">In the C-terminal section; belongs to the peptidase M41 family.</text>
</comment>
<proteinExistence type="evidence at transcript level"/>
<protein>
    <recommendedName>
        <fullName evidence="6">ATP-dependent zinc metalloprotease YME1L</fullName>
        <ecNumber evidence="9">3.4.24.-</ecNumber>
    </recommendedName>
    <alternativeName>
        <fullName evidence="10">YME1-like ATPase</fullName>
    </alternativeName>
</protein>
<organism evidence="11">
    <name type="scientific">Drosophila melanogaster</name>
    <name type="common">Fruit fly</name>
    <dbReference type="NCBI Taxonomy" id="7227"/>
    <lineage>
        <taxon>Eukaryota</taxon>
        <taxon>Metazoa</taxon>
        <taxon>Ecdysozoa</taxon>
        <taxon>Arthropoda</taxon>
        <taxon>Hexapoda</taxon>
        <taxon>Insecta</taxon>
        <taxon>Pterygota</taxon>
        <taxon>Neoptera</taxon>
        <taxon>Endopterygota</taxon>
        <taxon>Diptera</taxon>
        <taxon>Brachycera</taxon>
        <taxon>Muscomorpha</taxon>
        <taxon>Ephydroidea</taxon>
        <taxon>Drosophilidae</taxon>
        <taxon>Drosophila</taxon>
        <taxon>Sophophora</taxon>
    </lineage>
</organism>